<organism>
    <name type="scientific">Shigella sonnei (strain Ss046)</name>
    <dbReference type="NCBI Taxonomy" id="300269"/>
    <lineage>
        <taxon>Bacteria</taxon>
        <taxon>Pseudomonadati</taxon>
        <taxon>Pseudomonadota</taxon>
        <taxon>Gammaproteobacteria</taxon>
        <taxon>Enterobacterales</taxon>
        <taxon>Enterobacteriaceae</taxon>
        <taxon>Shigella</taxon>
    </lineage>
</organism>
<sequence length="288" mass="32361">MAEKKQWHETLHDQFGQYFAVDNVLYHEKTDHQDLIIFENAAFGRVMALDGVVQTTERDEFIYHEMMTHVPLLAHGHAKHVLIIGGGDGAMLREVTRHKNVESITMVEIDAGIVSFCRQYLPNHNAGSYDDPRFKLVIDDGVNFVNQTSQTFDVIISDCTDPIGPGESLFTSAFYEGCKRCLNPGGIFVAQNGVCFLQQEEAIDSYRKLSHYFSDVGFYQAAIPTYYGGIMTFAWATDNDALRHLSTEIIQARFLASGLKCRYYNPAIHTAAFALPQYLQDALASQPS</sequence>
<evidence type="ECO:0000255" key="1">
    <source>
        <dbReference type="HAMAP-Rule" id="MF_00198"/>
    </source>
</evidence>
<comment type="function">
    <text evidence="1">Catalyzes the irreversible transfer of a propylamine group from the amino donor S-adenosylmethioninamine (decarboxy-AdoMet) to putrescine (1,4-diaminobutane) to yield spermidine.</text>
</comment>
<comment type="catalytic activity">
    <reaction evidence="1">
        <text>S-adenosyl 3-(methylsulfanyl)propylamine + putrescine = S-methyl-5'-thioadenosine + spermidine + H(+)</text>
        <dbReference type="Rhea" id="RHEA:12721"/>
        <dbReference type="ChEBI" id="CHEBI:15378"/>
        <dbReference type="ChEBI" id="CHEBI:17509"/>
        <dbReference type="ChEBI" id="CHEBI:57443"/>
        <dbReference type="ChEBI" id="CHEBI:57834"/>
        <dbReference type="ChEBI" id="CHEBI:326268"/>
        <dbReference type="EC" id="2.5.1.16"/>
    </reaction>
</comment>
<comment type="pathway">
    <text evidence="1">Amine and polyamine biosynthesis; spermidine biosynthesis; spermidine from putrescine: step 1/1.</text>
</comment>
<comment type="subunit">
    <text evidence="1">Homodimer or homotetramer.</text>
</comment>
<comment type="subcellular location">
    <subcellularLocation>
        <location evidence="1">Cytoplasm</location>
    </subcellularLocation>
</comment>
<comment type="similarity">
    <text evidence="1">Belongs to the spermidine/spermine synthase family.</text>
</comment>
<keyword id="KW-0963">Cytoplasm</keyword>
<keyword id="KW-0620">Polyamine biosynthesis</keyword>
<keyword id="KW-1185">Reference proteome</keyword>
<keyword id="KW-0745">Spermidine biosynthesis</keyword>
<keyword id="KW-0808">Transferase</keyword>
<feature type="chain" id="PRO_1000012020" description="Polyamine aminopropyltransferase">
    <location>
        <begin position="1"/>
        <end position="288"/>
    </location>
</feature>
<feature type="domain" description="PABS" evidence="1">
    <location>
        <begin position="9"/>
        <end position="238"/>
    </location>
</feature>
<feature type="active site" description="Proton acceptor" evidence="1">
    <location>
        <position position="158"/>
    </location>
</feature>
<feature type="binding site" evidence="1">
    <location>
        <position position="33"/>
    </location>
    <ligand>
        <name>S-methyl-5'-thioadenosine</name>
        <dbReference type="ChEBI" id="CHEBI:17509"/>
    </ligand>
</feature>
<feature type="binding site" evidence="1">
    <location>
        <position position="64"/>
    </location>
    <ligand>
        <name>spermidine</name>
        <dbReference type="ChEBI" id="CHEBI:57834"/>
    </ligand>
</feature>
<feature type="binding site" evidence="1">
    <location>
        <position position="88"/>
    </location>
    <ligand>
        <name>spermidine</name>
        <dbReference type="ChEBI" id="CHEBI:57834"/>
    </ligand>
</feature>
<feature type="binding site" evidence="1">
    <location>
        <position position="108"/>
    </location>
    <ligand>
        <name>S-methyl-5'-thioadenosine</name>
        <dbReference type="ChEBI" id="CHEBI:17509"/>
    </ligand>
</feature>
<feature type="binding site" evidence="1">
    <location>
        <begin position="140"/>
        <end position="141"/>
    </location>
    <ligand>
        <name>S-methyl-5'-thioadenosine</name>
        <dbReference type="ChEBI" id="CHEBI:17509"/>
    </ligand>
</feature>
<feature type="binding site" evidence="1">
    <location>
        <begin position="158"/>
        <end position="161"/>
    </location>
    <ligand>
        <name>spermidine</name>
        <dbReference type="ChEBI" id="CHEBI:57834"/>
    </ligand>
</feature>
<feature type="binding site" evidence="1">
    <location>
        <position position="165"/>
    </location>
    <ligand>
        <name>S-methyl-5'-thioadenosine</name>
        <dbReference type="ChEBI" id="CHEBI:17509"/>
    </ligand>
</feature>
<reference key="1">
    <citation type="journal article" date="2005" name="Nucleic Acids Res.">
        <title>Genome dynamics and diversity of Shigella species, the etiologic agents of bacillary dysentery.</title>
        <authorList>
            <person name="Yang F."/>
            <person name="Yang J."/>
            <person name="Zhang X."/>
            <person name="Chen L."/>
            <person name="Jiang Y."/>
            <person name="Yan Y."/>
            <person name="Tang X."/>
            <person name="Wang J."/>
            <person name="Xiong Z."/>
            <person name="Dong J."/>
            <person name="Xue Y."/>
            <person name="Zhu Y."/>
            <person name="Xu X."/>
            <person name="Sun L."/>
            <person name="Chen S."/>
            <person name="Nie H."/>
            <person name="Peng J."/>
            <person name="Xu J."/>
            <person name="Wang Y."/>
            <person name="Yuan Z."/>
            <person name="Wen Y."/>
            <person name="Yao Z."/>
            <person name="Shen Y."/>
            <person name="Qiang B."/>
            <person name="Hou Y."/>
            <person name="Yu J."/>
            <person name="Jin Q."/>
        </authorList>
    </citation>
    <scope>NUCLEOTIDE SEQUENCE [LARGE SCALE GENOMIC DNA]</scope>
    <source>
        <strain>Ss046</strain>
    </source>
</reference>
<proteinExistence type="inferred from homology"/>
<gene>
    <name evidence="1" type="primary">speE</name>
    <name type="ordered locus">SSON_0129</name>
</gene>
<protein>
    <recommendedName>
        <fullName evidence="1">Polyamine aminopropyltransferase</fullName>
    </recommendedName>
    <alternativeName>
        <fullName evidence="1">Putrescine aminopropyltransferase</fullName>
        <shortName evidence="1">PAPT</shortName>
    </alternativeName>
    <alternativeName>
        <fullName evidence="1">Spermidine synthase</fullName>
        <shortName evidence="1">SPDS</shortName>
        <shortName evidence="1">SPDSY</shortName>
        <ecNumber evidence="1">2.5.1.16</ecNumber>
    </alternativeName>
</protein>
<dbReference type="EC" id="2.5.1.16" evidence="1"/>
<dbReference type="EMBL" id="CP000038">
    <property type="protein sequence ID" value="AAZ86923.1"/>
    <property type="molecule type" value="Genomic_DNA"/>
</dbReference>
<dbReference type="RefSeq" id="WP_000818400.1">
    <property type="nucleotide sequence ID" value="NC_007384.1"/>
</dbReference>
<dbReference type="SMR" id="Q3Z5N9"/>
<dbReference type="GeneID" id="93777315"/>
<dbReference type="KEGG" id="ssn:SSON_0129"/>
<dbReference type="HOGENOM" id="CLU_048199_0_0_6"/>
<dbReference type="UniPathway" id="UPA00248">
    <property type="reaction ID" value="UER00314"/>
</dbReference>
<dbReference type="Proteomes" id="UP000002529">
    <property type="component" value="Chromosome"/>
</dbReference>
<dbReference type="GO" id="GO:0005829">
    <property type="term" value="C:cytosol"/>
    <property type="evidence" value="ECO:0007669"/>
    <property type="project" value="TreeGrafter"/>
</dbReference>
<dbReference type="GO" id="GO:0004766">
    <property type="term" value="F:spermidine synthase activity"/>
    <property type="evidence" value="ECO:0007669"/>
    <property type="project" value="UniProtKB-UniRule"/>
</dbReference>
<dbReference type="GO" id="GO:0008295">
    <property type="term" value="P:spermidine biosynthetic process"/>
    <property type="evidence" value="ECO:0007669"/>
    <property type="project" value="UniProtKB-UniRule"/>
</dbReference>
<dbReference type="CDD" id="cd02440">
    <property type="entry name" value="AdoMet_MTases"/>
    <property type="match status" value="1"/>
</dbReference>
<dbReference type="FunFam" id="2.30.140.10:FF:000002">
    <property type="entry name" value="Polyamine aminopropyltransferase"/>
    <property type="match status" value="1"/>
</dbReference>
<dbReference type="FunFam" id="3.40.50.150:FF:000026">
    <property type="entry name" value="Polyamine aminopropyltransferase"/>
    <property type="match status" value="1"/>
</dbReference>
<dbReference type="Gene3D" id="2.30.140.10">
    <property type="entry name" value="Spermidine synthase, tetramerisation domain"/>
    <property type="match status" value="1"/>
</dbReference>
<dbReference type="Gene3D" id="3.40.50.150">
    <property type="entry name" value="Vaccinia Virus protein VP39"/>
    <property type="match status" value="1"/>
</dbReference>
<dbReference type="HAMAP" id="MF_00198">
    <property type="entry name" value="Spermidine_synth"/>
    <property type="match status" value="1"/>
</dbReference>
<dbReference type="InterPro" id="IPR030374">
    <property type="entry name" value="PABS"/>
</dbReference>
<dbReference type="InterPro" id="IPR030373">
    <property type="entry name" value="PABS_CS"/>
</dbReference>
<dbReference type="InterPro" id="IPR029063">
    <property type="entry name" value="SAM-dependent_MTases_sf"/>
</dbReference>
<dbReference type="InterPro" id="IPR001045">
    <property type="entry name" value="Spermi_synthase"/>
</dbReference>
<dbReference type="InterPro" id="IPR035246">
    <property type="entry name" value="Spermidine_synt_N"/>
</dbReference>
<dbReference type="InterPro" id="IPR037163">
    <property type="entry name" value="Spermidine_synt_N_sf"/>
</dbReference>
<dbReference type="NCBIfam" id="NF037959">
    <property type="entry name" value="MFS_SpdSyn"/>
    <property type="match status" value="1"/>
</dbReference>
<dbReference type="NCBIfam" id="NF002010">
    <property type="entry name" value="PRK00811.1"/>
    <property type="match status" value="1"/>
</dbReference>
<dbReference type="NCBIfam" id="TIGR00417">
    <property type="entry name" value="speE"/>
    <property type="match status" value="1"/>
</dbReference>
<dbReference type="PANTHER" id="PTHR11558:SF11">
    <property type="entry name" value="SPERMIDINE SYNTHASE"/>
    <property type="match status" value="1"/>
</dbReference>
<dbReference type="PANTHER" id="PTHR11558">
    <property type="entry name" value="SPERMIDINE/SPERMINE SYNTHASE"/>
    <property type="match status" value="1"/>
</dbReference>
<dbReference type="Pfam" id="PF17284">
    <property type="entry name" value="Spermine_synt_N"/>
    <property type="match status" value="1"/>
</dbReference>
<dbReference type="Pfam" id="PF01564">
    <property type="entry name" value="Spermine_synth"/>
    <property type="match status" value="1"/>
</dbReference>
<dbReference type="SUPFAM" id="SSF53335">
    <property type="entry name" value="S-adenosyl-L-methionine-dependent methyltransferases"/>
    <property type="match status" value="1"/>
</dbReference>
<dbReference type="PROSITE" id="PS01330">
    <property type="entry name" value="PABS_1"/>
    <property type="match status" value="1"/>
</dbReference>
<dbReference type="PROSITE" id="PS51006">
    <property type="entry name" value="PABS_2"/>
    <property type="match status" value="1"/>
</dbReference>
<name>SPEE_SHISS</name>
<accession>Q3Z5N9</accession>